<feature type="chain" id="PRO_0000311475" description="Putative iron-sulfur cluster insertion protein ErpA">
    <location>
        <begin position="1"/>
        <end position="116"/>
    </location>
</feature>
<feature type="binding site" evidence="1">
    <location>
        <position position="44"/>
    </location>
    <ligand>
        <name>iron-sulfur cluster</name>
        <dbReference type="ChEBI" id="CHEBI:30408"/>
    </ligand>
</feature>
<feature type="binding site" evidence="1">
    <location>
        <position position="108"/>
    </location>
    <ligand>
        <name>iron-sulfur cluster</name>
        <dbReference type="ChEBI" id="CHEBI:30408"/>
    </ligand>
</feature>
<feature type="binding site" evidence="1">
    <location>
        <position position="110"/>
    </location>
    <ligand>
        <name>iron-sulfur cluster</name>
        <dbReference type="ChEBI" id="CHEBI:30408"/>
    </ligand>
</feature>
<reference key="1">
    <citation type="journal article" date="2009" name="BMC Genomics">
        <title>Metabolic analysis of the soil microbe Dechloromonas aromatica str. RCB: indications of a surprisingly complex life-style and cryptic anaerobic pathways for aromatic degradation.</title>
        <authorList>
            <person name="Salinero K.K."/>
            <person name="Keller K."/>
            <person name="Feil W.S."/>
            <person name="Feil H."/>
            <person name="Trong S."/>
            <person name="Di Bartolo G."/>
            <person name="Lapidus A."/>
        </authorList>
    </citation>
    <scope>NUCLEOTIDE SEQUENCE [LARGE SCALE GENOMIC DNA]</scope>
    <source>
        <strain>RCB</strain>
    </source>
</reference>
<accession>Q47IC1</accession>
<keyword id="KW-0408">Iron</keyword>
<keyword id="KW-0411">Iron-sulfur</keyword>
<keyword id="KW-0479">Metal-binding</keyword>
<organism>
    <name type="scientific">Dechloromonas aromatica (strain RCB)</name>
    <dbReference type="NCBI Taxonomy" id="159087"/>
    <lineage>
        <taxon>Bacteria</taxon>
        <taxon>Pseudomonadati</taxon>
        <taxon>Pseudomonadota</taxon>
        <taxon>Betaproteobacteria</taxon>
        <taxon>Rhodocyclales</taxon>
        <taxon>Azonexaceae</taxon>
        <taxon>Dechloromonas</taxon>
    </lineage>
</organism>
<protein>
    <recommendedName>
        <fullName evidence="1">Putative iron-sulfur cluster insertion protein ErpA</fullName>
    </recommendedName>
</protein>
<name>ERPA_DECAR</name>
<comment type="function">
    <text evidence="1">Required for insertion of 4Fe-4S clusters.</text>
</comment>
<comment type="cofactor">
    <cofactor evidence="1">
        <name>iron-sulfur cluster</name>
        <dbReference type="ChEBI" id="CHEBI:30408"/>
    </cofactor>
    <text evidence="1">Binds 1 iron-sulfur cluster per subunit.</text>
</comment>
<comment type="subunit">
    <text evidence="1">Homodimer.</text>
</comment>
<comment type="similarity">
    <text evidence="1">Belongs to the HesB/IscA family.</text>
</comment>
<evidence type="ECO:0000255" key="1">
    <source>
        <dbReference type="HAMAP-Rule" id="MF_01380"/>
    </source>
</evidence>
<gene>
    <name evidence="1" type="primary">erpA</name>
    <name type="ordered locus">Daro_0653</name>
</gene>
<proteinExistence type="inferred from homology"/>
<sequence>MNAVNEMAVPFVFTDNAAGKVKELIEEEGNPGLKLRVFVTGGGCSGFQYGFTFDEEVNEDDTTMEKNGVTLLIDPMSYQYLVGAEIDYTEGLEGSQFVIRNPNATSTCGCGSSFSA</sequence>
<dbReference type="EMBL" id="CP000089">
    <property type="protein sequence ID" value="AAZ45410.1"/>
    <property type="molecule type" value="Genomic_DNA"/>
</dbReference>
<dbReference type="SMR" id="Q47IC1"/>
<dbReference type="STRING" id="159087.Daro_0653"/>
<dbReference type="KEGG" id="dar:Daro_0653"/>
<dbReference type="eggNOG" id="COG0316">
    <property type="taxonomic scope" value="Bacteria"/>
</dbReference>
<dbReference type="HOGENOM" id="CLU_069054_5_3_4"/>
<dbReference type="OrthoDB" id="9801228at2"/>
<dbReference type="GO" id="GO:0051537">
    <property type="term" value="F:2 iron, 2 sulfur cluster binding"/>
    <property type="evidence" value="ECO:0007669"/>
    <property type="project" value="TreeGrafter"/>
</dbReference>
<dbReference type="GO" id="GO:0051539">
    <property type="term" value="F:4 iron, 4 sulfur cluster binding"/>
    <property type="evidence" value="ECO:0007669"/>
    <property type="project" value="TreeGrafter"/>
</dbReference>
<dbReference type="GO" id="GO:0005506">
    <property type="term" value="F:iron ion binding"/>
    <property type="evidence" value="ECO:0007669"/>
    <property type="project" value="UniProtKB-UniRule"/>
</dbReference>
<dbReference type="GO" id="GO:0016226">
    <property type="term" value="P:iron-sulfur cluster assembly"/>
    <property type="evidence" value="ECO:0007669"/>
    <property type="project" value="UniProtKB-UniRule"/>
</dbReference>
<dbReference type="FunFam" id="2.60.300.12:FF:000002">
    <property type="entry name" value="Iron-sulfur cluster insertion protein ErpA"/>
    <property type="match status" value="1"/>
</dbReference>
<dbReference type="Gene3D" id="2.60.300.12">
    <property type="entry name" value="HesB-like domain"/>
    <property type="match status" value="1"/>
</dbReference>
<dbReference type="HAMAP" id="MF_01380">
    <property type="entry name" value="Fe_S_insert_ErpA"/>
    <property type="match status" value="1"/>
</dbReference>
<dbReference type="InterPro" id="IPR000361">
    <property type="entry name" value="FeS_biogenesis"/>
</dbReference>
<dbReference type="InterPro" id="IPR016092">
    <property type="entry name" value="FeS_cluster_insertion"/>
</dbReference>
<dbReference type="InterPro" id="IPR017870">
    <property type="entry name" value="FeS_cluster_insertion_CS"/>
</dbReference>
<dbReference type="InterPro" id="IPR023063">
    <property type="entry name" value="FeS_cluster_insertion_RrpA"/>
</dbReference>
<dbReference type="InterPro" id="IPR035903">
    <property type="entry name" value="HesB-like_dom_sf"/>
</dbReference>
<dbReference type="NCBIfam" id="TIGR00049">
    <property type="entry name" value="iron-sulfur cluster assembly accessory protein"/>
    <property type="match status" value="1"/>
</dbReference>
<dbReference type="NCBIfam" id="NF010147">
    <property type="entry name" value="PRK13623.1"/>
    <property type="match status" value="1"/>
</dbReference>
<dbReference type="PANTHER" id="PTHR43011">
    <property type="entry name" value="IRON-SULFUR CLUSTER ASSEMBLY 2 HOMOLOG, MITOCHONDRIAL"/>
    <property type="match status" value="1"/>
</dbReference>
<dbReference type="PANTHER" id="PTHR43011:SF1">
    <property type="entry name" value="IRON-SULFUR CLUSTER ASSEMBLY 2 HOMOLOG, MITOCHONDRIAL"/>
    <property type="match status" value="1"/>
</dbReference>
<dbReference type="Pfam" id="PF01521">
    <property type="entry name" value="Fe-S_biosyn"/>
    <property type="match status" value="1"/>
</dbReference>
<dbReference type="SUPFAM" id="SSF89360">
    <property type="entry name" value="HesB-like domain"/>
    <property type="match status" value="1"/>
</dbReference>
<dbReference type="PROSITE" id="PS01152">
    <property type="entry name" value="HESB"/>
    <property type="match status" value="1"/>
</dbReference>